<protein>
    <recommendedName>
        <fullName evidence="1">Large ribosomal subunit protein uL23</fullName>
    </recommendedName>
    <alternativeName>
        <fullName evidence="2">50S ribosomal protein L23</fullName>
    </alternativeName>
</protein>
<comment type="function">
    <text evidence="1">One of the early assembly proteins it binds 23S rRNA. One of the proteins that surrounds the polypeptide exit tunnel on the outside of the ribosome. Forms the main docking site for trigger factor binding to the ribosome.</text>
</comment>
<comment type="subunit">
    <text evidence="1">Part of the 50S ribosomal subunit. Contacts protein L29, and trigger factor when it is bound to the ribosome.</text>
</comment>
<comment type="similarity">
    <text evidence="1">Belongs to the universal ribosomal protein uL23 family.</text>
</comment>
<proteinExistence type="inferred from homology"/>
<dbReference type="EMBL" id="BX571661">
    <property type="protein sequence ID" value="CAE10740.1"/>
    <property type="molecule type" value="Genomic_DNA"/>
</dbReference>
<dbReference type="RefSeq" id="WP_011139524.1">
    <property type="nucleotide sequence ID" value="NC_005090.1"/>
</dbReference>
<dbReference type="SMR" id="Q7M8D6"/>
<dbReference type="STRING" id="273121.WS1714"/>
<dbReference type="KEGG" id="wsu:WS1714"/>
<dbReference type="eggNOG" id="COG0089">
    <property type="taxonomic scope" value="Bacteria"/>
</dbReference>
<dbReference type="HOGENOM" id="CLU_037562_3_1_7"/>
<dbReference type="Proteomes" id="UP000000422">
    <property type="component" value="Chromosome"/>
</dbReference>
<dbReference type="GO" id="GO:1990904">
    <property type="term" value="C:ribonucleoprotein complex"/>
    <property type="evidence" value="ECO:0007669"/>
    <property type="project" value="UniProtKB-KW"/>
</dbReference>
<dbReference type="GO" id="GO:0005840">
    <property type="term" value="C:ribosome"/>
    <property type="evidence" value="ECO:0007669"/>
    <property type="project" value="UniProtKB-KW"/>
</dbReference>
<dbReference type="GO" id="GO:0019843">
    <property type="term" value="F:rRNA binding"/>
    <property type="evidence" value="ECO:0007669"/>
    <property type="project" value="UniProtKB-UniRule"/>
</dbReference>
<dbReference type="GO" id="GO:0003735">
    <property type="term" value="F:structural constituent of ribosome"/>
    <property type="evidence" value="ECO:0007669"/>
    <property type="project" value="InterPro"/>
</dbReference>
<dbReference type="GO" id="GO:0006412">
    <property type="term" value="P:translation"/>
    <property type="evidence" value="ECO:0007669"/>
    <property type="project" value="UniProtKB-UniRule"/>
</dbReference>
<dbReference type="Gene3D" id="3.30.70.330">
    <property type="match status" value="1"/>
</dbReference>
<dbReference type="HAMAP" id="MF_01369_B">
    <property type="entry name" value="Ribosomal_uL23_B"/>
    <property type="match status" value="1"/>
</dbReference>
<dbReference type="InterPro" id="IPR012677">
    <property type="entry name" value="Nucleotide-bd_a/b_plait_sf"/>
</dbReference>
<dbReference type="InterPro" id="IPR013025">
    <property type="entry name" value="Ribosomal_uL23-like"/>
</dbReference>
<dbReference type="InterPro" id="IPR012678">
    <property type="entry name" value="Ribosomal_uL23/eL15/eS24_sf"/>
</dbReference>
<dbReference type="NCBIfam" id="NF004362">
    <property type="entry name" value="PRK05738.2-2"/>
    <property type="match status" value="1"/>
</dbReference>
<dbReference type="Pfam" id="PF00276">
    <property type="entry name" value="Ribosomal_L23"/>
    <property type="match status" value="1"/>
</dbReference>
<dbReference type="SUPFAM" id="SSF54189">
    <property type="entry name" value="Ribosomal proteins S24e, L23 and L15e"/>
    <property type="match status" value="1"/>
</dbReference>
<gene>
    <name evidence="1" type="primary">rplW</name>
    <name type="ordered locus">WS1714</name>
</gene>
<name>RL23_WOLSU</name>
<reference key="1">
    <citation type="journal article" date="2003" name="Proc. Natl. Acad. Sci. U.S.A.">
        <title>Complete genome sequence and analysis of Wolinella succinogenes.</title>
        <authorList>
            <person name="Baar C."/>
            <person name="Eppinger M."/>
            <person name="Raddatz G."/>
            <person name="Simon J."/>
            <person name="Lanz C."/>
            <person name="Klimmek O."/>
            <person name="Nandakumar R."/>
            <person name="Gross R."/>
            <person name="Rosinus A."/>
            <person name="Keller H."/>
            <person name="Jagtap P."/>
            <person name="Linke B."/>
            <person name="Meyer F."/>
            <person name="Lederer H."/>
            <person name="Schuster S.C."/>
        </authorList>
    </citation>
    <scope>NUCLEOTIDE SEQUENCE [LARGE SCALE GENOMIC DNA]</scope>
    <source>
        <strain>ATCC 29543 / DSM 1740 / CCUG 13145 / JCM 31913 / LMG 7466 / NCTC 11488 / FDC 602W</strain>
    </source>
</reference>
<keyword id="KW-1185">Reference proteome</keyword>
<keyword id="KW-0687">Ribonucleoprotein</keyword>
<keyword id="KW-0689">Ribosomal protein</keyword>
<keyword id="KW-0694">RNA-binding</keyword>
<keyword id="KW-0699">rRNA-binding</keyword>
<accession>Q7M8D6</accession>
<organism>
    <name type="scientific">Wolinella succinogenes (strain ATCC 29543 / DSM 1740 / CCUG 13145 / JCM 31913 / LMG 7466 / NCTC 11488 / FDC 602W)</name>
    <name type="common">Vibrio succinogenes</name>
    <dbReference type="NCBI Taxonomy" id="273121"/>
    <lineage>
        <taxon>Bacteria</taxon>
        <taxon>Pseudomonadati</taxon>
        <taxon>Campylobacterota</taxon>
        <taxon>Epsilonproteobacteria</taxon>
        <taxon>Campylobacterales</taxon>
        <taxon>Helicobacteraceae</taxon>
        <taxon>Wolinella</taxon>
    </lineage>
</organism>
<sequence>MADITDIKSIMYTEKSLQIQESGVLVVQTSPKVSKNQLKEVFKEYFGFTPVRVNSLRQAGKIKRFRGVEGKRASFKKFYVKLPEGAKIESLAV</sequence>
<evidence type="ECO:0000255" key="1">
    <source>
        <dbReference type="HAMAP-Rule" id="MF_01369"/>
    </source>
</evidence>
<evidence type="ECO:0000305" key="2"/>
<feature type="chain" id="PRO_1000144624" description="Large ribosomal subunit protein uL23">
    <location>
        <begin position="1"/>
        <end position="93"/>
    </location>
</feature>